<dbReference type="EMBL" id="AE008691">
    <property type="protein sequence ID" value="AAM24362.1"/>
    <property type="molecule type" value="Genomic_DNA"/>
</dbReference>
<dbReference type="SMR" id="Q8RAS5"/>
<dbReference type="STRING" id="273068.TTE1127"/>
<dbReference type="KEGG" id="tte:TTE1127"/>
<dbReference type="eggNOG" id="COG2262">
    <property type="taxonomic scope" value="Bacteria"/>
</dbReference>
<dbReference type="HOGENOM" id="CLU_019597_1_0_9"/>
<dbReference type="Proteomes" id="UP000000555">
    <property type="component" value="Chromosome"/>
</dbReference>
<dbReference type="GO" id="GO:0005737">
    <property type="term" value="C:cytoplasm"/>
    <property type="evidence" value="ECO:0007669"/>
    <property type="project" value="UniProtKB-SubCell"/>
</dbReference>
<dbReference type="GO" id="GO:0005525">
    <property type="term" value="F:GTP binding"/>
    <property type="evidence" value="ECO:0007669"/>
    <property type="project" value="UniProtKB-UniRule"/>
</dbReference>
<dbReference type="GO" id="GO:0003924">
    <property type="term" value="F:GTPase activity"/>
    <property type="evidence" value="ECO:0007669"/>
    <property type="project" value="UniProtKB-UniRule"/>
</dbReference>
<dbReference type="GO" id="GO:0046872">
    <property type="term" value="F:metal ion binding"/>
    <property type="evidence" value="ECO:0007669"/>
    <property type="project" value="UniProtKB-KW"/>
</dbReference>
<dbReference type="GO" id="GO:0043022">
    <property type="term" value="F:ribosome binding"/>
    <property type="evidence" value="ECO:0007669"/>
    <property type="project" value="TreeGrafter"/>
</dbReference>
<dbReference type="CDD" id="cd01878">
    <property type="entry name" value="HflX"/>
    <property type="match status" value="1"/>
</dbReference>
<dbReference type="FunFam" id="3.40.50.11060:FF:000001">
    <property type="entry name" value="GTPase HflX"/>
    <property type="match status" value="1"/>
</dbReference>
<dbReference type="FunFam" id="3.40.50.300:FF:000173">
    <property type="entry name" value="GTPase HflX"/>
    <property type="match status" value="1"/>
</dbReference>
<dbReference type="Gene3D" id="6.10.250.2860">
    <property type="match status" value="1"/>
</dbReference>
<dbReference type="Gene3D" id="3.40.50.11060">
    <property type="entry name" value="GTPase HflX, N-terminal domain"/>
    <property type="match status" value="1"/>
</dbReference>
<dbReference type="Gene3D" id="3.40.50.300">
    <property type="entry name" value="P-loop containing nucleotide triphosphate hydrolases"/>
    <property type="match status" value="1"/>
</dbReference>
<dbReference type="HAMAP" id="MF_00900">
    <property type="entry name" value="GTPase_HflX"/>
    <property type="match status" value="1"/>
</dbReference>
<dbReference type="InterPro" id="IPR030394">
    <property type="entry name" value="G_HFLX_dom"/>
</dbReference>
<dbReference type="InterPro" id="IPR006073">
    <property type="entry name" value="GTP-bd"/>
</dbReference>
<dbReference type="InterPro" id="IPR032305">
    <property type="entry name" value="GTP-bd_M"/>
</dbReference>
<dbReference type="InterPro" id="IPR016496">
    <property type="entry name" value="GTPase_HflX"/>
</dbReference>
<dbReference type="InterPro" id="IPR025121">
    <property type="entry name" value="GTPase_HflX_N"/>
</dbReference>
<dbReference type="InterPro" id="IPR042108">
    <property type="entry name" value="GTPase_HflX_N_sf"/>
</dbReference>
<dbReference type="InterPro" id="IPR027417">
    <property type="entry name" value="P-loop_NTPase"/>
</dbReference>
<dbReference type="NCBIfam" id="TIGR03156">
    <property type="entry name" value="GTP_HflX"/>
    <property type="match status" value="1"/>
</dbReference>
<dbReference type="PANTHER" id="PTHR10229:SF0">
    <property type="entry name" value="GTP-BINDING PROTEIN 6-RELATED"/>
    <property type="match status" value="1"/>
</dbReference>
<dbReference type="PANTHER" id="PTHR10229">
    <property type="entry name" value="GTP-BINDING PROTEIN HFLX"/>
    <property type="match status" value="1"/>
</dbReference>
<dbReference type="Pfam" id="PF16360">
    <property type="entry name" value="GTP-bdg_M"/>
    <property type="match status" value="1"/>
</dbReference>
<dbReference type="Pfam" id="PF13167">
    <property type="entry name" value="GTP-bdg_N"/>
    <property type="match status" value="1"/>
</dbReference>
<dbReference type="Pfam" id="PF01926">
    <property type="entry name" value="MMR_HSR1"/>
    <property type="match status" value="1"/>
</dbReference>
<dbReference type="PIRSF" id="PIRSF006809">
    <property type="entry name" value="GTP-binding_hflX_prd"/>
    <property type="match status" value="1"/>
</dbReference>
<dbReference type="PRINTS" id="PR00326">
    <property type="entry name" value="GTP1OBG"/>
</dbReference>
<dbReference type="SUPFAM" id="SSF52540">
    <property type="entry name" value="P-loop containing nucleoside triphosphate hydrolases"/>
    <property type="match status" value="1"/>
</dbReference>
<dbReference type="PROSITE" id="PS51705">
    <property type="entry name" value="G_HFLX"/>
    <property type="match status" value="1"/>
</dbReference>
<evidence type="ECO:0000255" key="1">
    <source>
        <dbReference type="HAMAP-Rule" id="MF_00900"/>
    </source>
</evidence>
<keyword id="KW-0963">Cytoplasm</keyword>
<keyword id="KW-0342">GTP-binding</keyword>
<keyword id="KW-0460">Magnesium</keyword>
<keyword id="KW-0479">Metal-binding</keyword>
<keyword id="KW-0547">Nucleotide-binding</keyword>
<keyword id="KW-1185">Reference proteome</keyword>
<accession>Q8RAS5</accession>
<feature type="chain" id="PRO_0000412663" description="GTPase HflX">
    <location>
        <begin position="1"/>
        <end position="428"/>
    </location>
</feature>
<feature type="domain" description="Hflx-type G" evidence="1">
    <location>
        <begin position="214"/>
        <end position="374"/>
    </location>
</feature>
<feature type="binding site" evidence="1">
    <location>
        <begin position="220"/>
        <end position="227"/>
    </location>
    <ligand>
        <name>GTP</name>
        <dbReference type="ChEBI" id="CHEBI:37565"/>
    </ligand>
</feature>
<feature type="binding site" evidence="1">
    <location>
        <position position="227"/>
    </location>
    <ligand>
        <name>Mg(2+)</name>
        <dbReference type="ChEBI" id="CHEBI:18420"/>
    </ligand>
</feature>
<feature type="binding site" evidence="1">
    <location>
        <begin position="245"/>
        <end position="249"/>
    </location>
    <ligand>
        <name>GTP</name>
        <dbReference type="ChEBI" id="CHEBI:37565"/>
    </ligand>
</feature>
<feature type="binding site" evidence="1">
    <location>
        <position position="247"/>
    </location>
    <ligand>
        <name>Mg(2+)</name>
        <dbReference type="ChEBI" id="CHEBI:18420"/>
    </ligand>
</feature>
<feature type="binding site" evidence="1">
    <location>
        <begin position="267"/>
        <end position="270"/>
    </location>
    <ligand>
        <name>GTP</name>
        <dbReference type="ChEBI" id="CHEBI:37565"/>
    </ligand>
</feature>
<feature type="binding site" evidence="1">
    <location>
        <begin position="333"/>
        <end position="336"/>
    </location>
    <ligand>
        <name>GTP</name>
        <dbReference type="ChEBI" id="CHEBI:37565"/>
    </ligand>
</feature>
<feature type="binding site" evidence="1">
    <location>
        <begin position="352"/>
        <end position="354"/>
    </location>
    <ligand>
        <name>GTP</name>
        <dbReference type="ChEBI" id="CHEBI:37565"/>
    </ligand>
</feature>
<sequence>MQKIEYIIITKLWVGDCMEELARDKERAILVAIISSPEDEETLNELKELAVTAGAEVIGILTQKKKGINKAHYIGKGKLEELKMFVENQQADLVIVNDELTGTQIKNLEDALGVKIVDRTNLILDIFAKRARSKEGMLQVELAQLKYRLPRLVGLGGQLSRLGGGIGTRGPGETKLEVDRRHIRNRIKAIEEKLEELEKHRNLQRQRRKKNQIPVVAIVGYTNAGKSTLLNALTGADAYVEDKLFATLDPTARKLVLPSGREVILTDTVGFIRKLPHDLVEAFKSTLEEVKYADLLLHVIDVTSPDMDEKIKVVEKVLSDLGAIETPRINVYNKIDLLEIVPSGNNRDIYISAKNKIGLDRLLEAIERELFKETEVVSFLFPYEKTREYNYLKERGKVIEEDFDEKGISVKAEVTCEIKERLRNFIIS</sequence>
<comment type="function">
    <text evidence="1">GTPase that associates with the 50S ribosomal subunit and may have a role during protein synthesis or ribosome biogenesis.</text>
</comment>
<comment type="cofactor">
    <cofactor evidence="1">
        <name>Mg(2+)</name>
        <dbReference type="ChEBI" id="CHEBI:18420"/>
    </cofactor>
</comment>
<comment type="subunit">
    <text evidence="1">Monomer. Associates with the 50S ribosomal subunit.</text>
</comment>
<comment type="subcellular location">
    <subcellularLocation>
        <location evidence="1">Cytoplasm</location>
    </subcellularLocation>
    <text evidence="1">May associate with membranes.</text>
</comment>
<comment type="similarity">
    <text evidence="1">Belongs to the TRAFAC class OBG-HflX-like GTPase superfamily. HflX GTPase family.</text>
</comment>
<reference key="1">
    <citation type="journal article" date="2002" name="Genome Res.">
        <title>A complete sequence of the T. tengcongensis genome.</title>
        <authorList>
            <person name="Bao Q."/>
            <person name="Tian Y."/>
            <person name="Li W."/>
            <person name="Xu Z."/>
            <person name="Xuan Z."/>
            <person name="Hu S."/>
            <person name="Dong W."/>
            <person name="Yang J."/>
            <person name="Chen Y."/>
            <person name="Xue Y."/>
            <person name="Xu Y."/>
            <person name="Lai X."/>
            <person name="Huang L."/>
            <person name="Dong X."/>
            <person name="Ma Y."/>
            <person name="Ling L."/>
            <person name="Tan H."/>
            <person name="Chen R."/>
            <person name="Wang J."/>
            <person name="Yu J."/>
            <person name="Yang H."/>
        </authorList>
    </citation>
    <scope>NUCLEOTIDE SEQUENCE [LARGE SCALE GENOMIC DNA]</scope>
    <source>
        <strain>DSM 15242 / JCM 11007 / NBRC 100824 / MB4</strain>
    </source>
</reference>
<protein>
    <recommendedName>
        <fullName evidence="1">GTPase HflX</fullName>
    </recommendedName>
    <alternativeName>
        <fullName evidence="1">GTP-binding protein HflX</fullName>
    </alternativeName>
</protein>
<name>HFLX_CALS4</name>
<gene>
    <name evidence="1" type="primary">hflX</name>
    <name type="ordered locus">TTE1127</name>
</gene>
<organism>
    <name type="scientific">Caldanaerobacter subterraneus subsp. tengcongensis (strain DSM 15242 / JCM 11007 / NBRC 100824 / MB4)</name>
    <name type="common">Thermoanaerobacter tengcongensis</name>
    <dbReference type="NCBI Taxonomy" id="273068"/>
    <lineage>
        <taxon>Bacteria</taxon>
        <taxon>Bacillati</taxon>
        <taxon>Bacillota</taxon>
        <taxon>Clostridia</taxon>
        <taxon>Thermoanaerobacterales</taxon>
        <taxon>Thermoanaerobacteraceae</taxon>
        <taxon>Caldanaerobacter</taxon>
    </lineage>
</organism>
<proteinExistence type="inferred from homology"/>